<name>GTR3_MOUSE</name>
<proteinExistence type="evidence at protein level"/>
<sequence>MGTTKVTPSLVFAVTVATIGSFQFGYNTGVINAPETILKDFLNYTLEERLEDLPSEGLLTALWSLCVAIFSVGGMIGSFSVGLFVNRFGRRNSMLLVNLLAIIAGCLMGFAKIAESVEMLILGRLLIGIFCGLCTGFVPMYIGEVSPTALRGAFGTLNQLGIVVGILVAQIFGLDFILGSEELWPGLLGLTIIPAILQSAALPFCPESPRFLLINKKEEDQATEILQRLWGTSDVVQEIQEMKDESVRMSQEKQVTVLELFRSPNYVQPLLISIVLQLSQQLSGINAVFYYSTGIFKDAGVQEPIYATIGAGVVNTIFTVVSLFLVERAGRRTLHMIGLGGMAVCSVFMTISLLLKDDYEAMSFVCIVAILIYVAFFEIGPGPIPWFIVAELFSQGPRPAAIAVAGCCNWTSNFLVGMLFPSAAAYLGAYVFIIFAAFLIFFLIFTFFKVPETKGRTFEDIARAFEGQAHSGKGPAGVELNSMQPVKETPGNA</sequence>
<reference key="1">
    <citation type="journal article" date="1992" name="J. Biol. Chem.">
        <title>Glucose transporter expression in brain. cDNA sequence of mouse GLUT3, the brain facilitative glucose transporter isoform, and identification of sites of expression by in situ hybridization.</title>
        <authorList>
            <person name="Nagamatsu S."/>
            <person name="Kornhauser J.M."/>
            <person name="Seino S."/>
            <person name="Mayo K.E."/>
            <person name="Steiner D.F."/>
            <person name="Bell G.I."/>
        </authorList>
    </citation>
    <scope>NUCLEOTIDE SEQUENCE [MRNA]</scope>
    <scope>SUBCELLULAR LOCATION</scope>
    <scope>TISSUE SPECIFICITY</scope>
    <source>
        <tissue>Brain</tissue>
    </source>
</reference>
<reference key="2">
    <citation type="submission" date="1994-07" db="EMBL/GenBank/DDBJ databases">
        <title>Evolution of facilitative sugar transporter gene family: Characterization of mouse GLUT3 and human GLUT5 genes.</title>
        <authorList>
            <person name="Takeda J."/>
            <person name="Minokoshi Y."/>
            <person name="Yasuda K."/>
            <person name="Kayano T."/>
            <person name="Graeme B.I."/>
        </authorList>
    </citation>
    <scope>NUCLEOTIDE SEQUENCE [GENOMIC DNA]</scope>
</reference>
<reference key="3">
    <citation type="journal article" date="2004" name="Genome Res.">
        <title>The status, quality, and expansion of the NIH full-length cDNA project: the Mammalian Gene Collection (MGC).</title>
        <authorList>
            <consortium name="The MGC Project Team"/>
        </authorList>
    </citation>
    <scope>NUCLEOTIDE SEQUENCE [LARGE SCALE MRNA]</scope>
    <source>
        <tissue>Retina</tissue>
    </source>
</reference>
<reference key="4">
    <citation type="submission" date="2007-04" db="UniProtKB">
        <authorList>
            <person name="Lubec G."/>
            <person name="Kang S.U."/>
        </authorList>
    </citation>
    <scope>PROTEIN SEQUENCE OF 218-228</scope>
    <scope>IDENTIFICATION BY MASS SPECTROMETRY</scope>
    <source>
        <strain>C57BL/6J</strain>
        <tissue>Brain</tissue>
    </source>
</reference>
<reference key="5">
    <citation type="journal article" date="2009" name="Nat. Biotechnol.">
        <title>Mass-spectrometric identification and relative quantification of N-linked cell surface glycoproteins.</title>
        <authorList>
            <person name="Wollscheid B."/>
            <person name="Bausch-Fluck D."/>
            <person name="Henderson C."/>
            <person name="O'Brien R."/>
            <person name="Bibel M."/>
            <person name="Schiess R."/>
            <person name="Aebersold R."/>
            <person name="Watts J.D."/>
        </authorList>
    </citation>
    <scope>GLYCOSYLATION [LARGE SCALE ANALYSIS] AT ASN-43</scope>
</reference>
<reference key="6">
    <citation type="journal article" date="2010" name="Cell">
        <title>A tissue-specific atlas of mouse protein phosphorylation and expression.</title>
        <authorList>
            <person name="Huttlin E.L."/>
            <person name="Jedrychowski M.P."/>
            <person name="Elias J.E."/>
            <person name="Goswami T."/>
            <person name="Rad R."/>
            <person name="Beausoleil S.A."/>
            <person name="Villen J."/>
            <person name="Haas W."/>
            <person name="Sowa M.E."/>
            <person name="Gygi S.P."/>
        </authorList>
    </citation>
    <scope>PHOSPHORYLATION [LARGE SCALE ANALYSIS] AT THR-232 AND SER-471</scope>
    <scope>IDENTIFICATION BY MASS SPECTROMETRY [LARGE SCALE ANALYSIS]</scope>
    <source>
        <tissue>Brain</tissue>
        <tissue>Heart</tissue>
        <tissue>Spleen</tissue>
        <tissue>Testis</tissue>
    </source>
</reference>
<reference key="7">
    <citation type="journal article" date="2022" name="Dev. Biol.">
        <title>IRGC1, a testis-enriched immunity related GTPase, is important for fibrous sheath integrity and sperm motility in mice.</title>
        <authorList>
            <person name="Kaneda Y."/>
            <person name="Miyata H."/>
            <person name="Shimada K."/>
            <person name="Oyama Y."/>
            <person name="Iida-Norita R."/>
            <person name="Ikawa M."/>
        </authorList>
    </citation>
    <scope>TISSUE SPECIFICITY</scope>
</reference>
<reference key="8">
    <citation type="journal article" date="2022" name="Nat. Commun.">
        <title>A Nodal enhanced micropeptide NEMEP regulates glucose uptake during mesendoderm differentiation of embryonic stem cells.</title>
        <authorList>
            <person name="Fu H."/>
            <person name="Wang T."/>
            <person name="Kong X."/>
            <person name="Yan K."/>
            <person name="Yang Y."/>
            <person name="Cao J."/>
            <person name="Yuan Y."/>
            <person name="Wang N."/>
            <person name="Kee K."/>
            <person name="Lu Z.J."/>
            <person name="Xi Q."/>
        </authorList>
    </citation>
    <scope>FUNCTION</scope>
    <scope>INTERACTION WITH SMIM43</scope>
    <scope>SUBCELLULAR LOCATION</scope>
</reference>
<accession>P32037</accession>
<evidence type="ECO:0000250" key="1">
    <source>
        <dbReference type="UniProtKB" id="P11169"/>
    </source>
</evidence>
<evidence type="ECO:0000250" key="2">
    <source>
        <dbReference type="UniProtKB" id="Q07647"/>
    </source>
</evidence>
<evidence type="ECO:0000255" key="3"/>
<evidence type="ECO:0000256" key="4">
    <source>
        <dbReference type="SAM" id="MobiDB-lite"/>
    </source>
</evidence>
<evidence type="ECO:0000269" key="5">
    <source>
    </source>
</evidence>
<evidence type="ECO:0000269" key="6">
    <source>
    </source>
</evidence>
<evidence type="ECO:0000269" key="7">
    <source>
    </source>
</evidence>
<evidence type="ECO:0000269" key="8">
    <source>
    </source>
</evidence>
<evidence type="ECO:0000303" key="9">
    <source>
    </source>
</evidence>
<evidence type="ECO:0000305" key="10"/>
<evidence type="ECO:0000312" key="11">
    <source>
        <dbReference type="MGI" id="MGI:95757"/>
    </source>
</evidence>
<evidence type="ECO:0007744" key="12">
    <source>
    </source>
</evidence>
<comment type="function">
    <text evidence="1 8">Facilitative glucose transporter (PubMed:35810171). Can also mediate the uptake of various other monosaccharides across the cell membrane (By similarity). Mediates the uptake of glucose, 2-deoxyglucose, galactose, mannose, xylose and fucose, and probably also dehydroascorbate (By similarity). Does not mediate fructose transport (By similarity). Required for mesendoderm differentiation (PubMed:35810171).</text>
</comment>
<comment type="catalytic activity">
    <reaction evidence="1">
        <text>D-glucose(out) = D-glucose(in)</text>
        <dbReference type="Rhea" id="RHEA:60376"/>
        <dbReference type="ChEBI" id="CHEBI:4167"/>
    </reaction>
</comment>
<comment type="catalytic activity">
    <reaction evidence="1">
        <text>D-galactose(in) = D-galactose(out)</text>
        <dbReference type="Rhea" id="RHEA:34915"/>
        <dbReference type="ChEBI" id="CHEBI:4139"/>
    </reaction>
</comment>
<comment type="activity regulation">
    <text evidence="1">Deoxyglucose transport is inhibited by D-glucose, D-galactose and maltose. Galactose transport is inhibited by D-glucose and maltose.</text>
</comment>
<comment type="subunit">
    <text evidence="8">Interacts with SMIM43; the interaction may promote SLC2A3-mediated glucose transport to meet the energy needs of mesendoderm differentiation.</text>
</comment>
<comment type="interaction">
    <interactant intactId="EBI-21145965">
        <id>P32037</id>
    </interactant>
    <interactant intactId="EBI-46438951">
        <id>A0A286YD83</id>
        <label>Smim43</label>
    </interactant>
    <organismsDiffer>false</organismsDiffer>
    <experiments>6</experiments>
</comment>
<comment type="subcellular location">
    <subcellularLocation>
        <location evidence="5 8">Cell membrane</location>
        <topology evidence="1">Multi-pass membrane protein</topology>
    </subcellularLocation>
    <subcellularLocation>
        <location evidence="2">Perikaryon</location>
    </subcellularLocation>
    <subcellularLocation>
        <location evidence="2">Cell projection</location>
    </subcellularLocation>
    <text evidence="2">Localized to densely spaced patches along neuronal processes.</text>
</comment>
<comment type="tissue specificity">
    <text evidence="5 7">Expressed in spermatozoa (at protein level) (PubMed:35618043). Detected in brain (at protein level) (PubMed:1730609). Abundantly expressed in the hippocampus, cerebellum and cerebral cortex with lower expression in the dentate gyrus and piriform cortex (PubMed:1730609).</text>
</comment>
<comment type="domain">
    <text evidence="1">Transport is mediated via a series of conformation changes, switching between a conformation where the substrate-binding cavity is accessible from the outside, and a another conformation where it is accessible from the cytoplasm.</text>
</comment>
<comment type="similarity">
    <text evidence="10">Belongs to the major facilitator superfamily. Sugar transporter (TC 2.A.1.1) family. Glucose transporter subfamily.</text>
</comment>
<keyword id="KW-1003">Cell membrane</keyword>
<keyword id="KW-0966">Cell projection</keyword>
<keyword id="KW-0903">Direct protein sequencing</keyword>
<keyword id="KW-0325">Glycoprotein</keyword>
<keyword id="KW-0472">Membrane</keyword>
<keyword id="KW-0597">Phosphoprotein</keyword>
<keyword id="KW-1185">Reference proteome</keyword>
<keyword id="KW-0762">Sugar transport</keyword>
<keyword id="KW-0812">Transmembrane</keyword>
<keyword id="KW-1133">Transmembrane helix</keyword>
<keyword id="KW-0813">Transport</keyword>
<protein>
    <recommendedName>
        <fullName evidence="10">Solute carrier family 2, facilitated glucose transporter member 3</fullName>
    </recommendedName>
    <alternativeName>
        <fullName evidence="9">Glucose transporter type 3, brain</fullName>
        <shortName evidence="9">GLUT-3</shortName>
    </alternativeName>
</protein>
<organism>
    <name type="scientific">Mus musculus</name>
    <name type="common">Mouse</name>
    <dbReference type="NCBI Taxonomy" id="10090"/>
    <lineage>
        <taxon>Eukaryota</taxon>
        <taxon>Metazoa</taxon>
        <taxon>Chordata</taxon>
        <taxon>Craniata</taxon>
        <taxon>Vertebrata</taxon>
        <taxon>Euteleostomi</taxon>
        <taxon>Mammalia</taxon>
        <taxon>Eutheria</taxon>
        <taxon>Euarchontoglires</taxon>
        <taxon>Glires</taxon>
        <taxon>Rodentia</taxon>
        <taxon>Myomorpha</taxon>
        <taxon>Muroidea</taxon>
        <taxon>Muridae</taxon>
        <taxon>Murinae</taxon>
        <taxon>Mus</taxon>
        <taxon>Mus</taxon>
    </lineage>
</organism>
<feature type="chain" id="PRO_0000050354" description="Solute carrier family 2, facilitated glucose transporter member 3">
    <location>
        <begin position="1"/>
        <end position="493"/>
    </location>
</feature>
<feature type="topological domain" description="Cytoplasmic" evidence="1">
    <location>
        <begin position="1"/>
        <end position="10"/>
    </location>
</feature>
<feature type="transmembrane region" description="Helical; Name=1" evidence="1 3">
    <location>
        <begin position="11"/>
        <end position="32"/>
    </location>
</feature>
<feature type="topological domain" description="Extracellular" evidence="1">
    <location>
        <begin position="33"/>
        <end position="64"/>
    </location>
</feature>
<feature type="transmembrane region" description="Helical; Name=2" evidence="1 3">
    <location>
        <begin position="65"/>
        <end position="85"/>
    </location>
</feature>
<feature type="topological domain" description="Cytoplasmic" evidence="1">
    <location>
        <begin position="86"/>
        <end position="90"/>
    </location>
</feature>
<feature type="transmembrane region" description="Helical; Name=3" evidence="1">
    <location>
        <begin position="91"/>
        <end position="111"/>
    </location>
</feature>
<feature type="topological domain" description="Extracellular" evidence="1">
    <location>
        <begin position="112"/>
        <end position="118"/>
    </location>
</feature>
<feature type="transmembrane region" description="Helical; Name=4" evidence="1 3">
    <location>
        <begin position="119"/>
        <end position="142"/>
    </location>
</feature>
<feature type="topological domain" description="Cytoplasmic" evidence="1">
    <location>
        <begin position="143"/>
        <end position="153"/>
    </location>
</feature>
<feature type="transmembrane region" description="Helical; Name=5" evidence="1 3">
    <location>
        <begin position="154"/>
        <end position="174"/>
    </location>
</feature>
<feature type="topological domain" description="Extracellular" evidence="1">
    <location>
        <begin position="175"/>
        <end position="183"/>
    </location>
</feature>
<feature type="transmembrane region" description="Helical; Name=6" evidence="1 3">
    <location>
        <begin position="184"/>
        <end position="204"/>
    </location>
</feature>
<feature type="topological domain" description="Cytoplasmic" evidence="1">
    <location>
        <begin position="205"/>
        <end position="269"/>
    </location>
</feature>
<feature type="transmembrane region" description="Helical; Name=7" evidence="1 3">
    <location>
        <begin position="270"/>
        <end position="290"/>
    </location>
</feature>
<feature type="topological domain" description="Extracellular" evidence="1">
    <location>
        <begin position="291"/>
        <end position="304"/>
    </location>
</feature>
<feature type="transmembrane region" description="Helical; Name=8" evidence="1 3">
    <location>
        <begin position="305"/>
        <end position="325"/>
    </location>
</feature>
<feature type="topological domain" description="Cytoplasmic" evidence="1">
    <location>
        <begin position="326"/>
        <end position="331"/>
    </location>
</feature>
<feature type="transmembrane region" description="Helical; Name=9" evidence="1 3">
    <location>
        <begin position="332"/>
        <end position="352"/>
    </location>
</feature>
<feature type="topological domain" description="Extracellular" evidence="1">
    <location>
        <begin position="353"/>
        <end position="363"/>
    </location>
</feature>
<feature type="transmembrane region" description="Helical; Name=10" evidence="1 3">
    <location>
        <begin position="364"/>
        <end position="389"/>
    </location>
</feature>
<feature type="topological domain" description="Cytoplasmic" evidence="1">
    <location>
        <begin position="390"/>
        <end position="399"/>
    </location>
</feature>
<feature type="transmembrane region" description="Helical; Name=11" evidence="1 3">
    <location>
        <begin position="400"/>
        <end position="420"/>
    </location>
</feature>
<feature type="topological domain" description="Extracellular" evidence="1">
    <location>
        <begin position="421"/>
        <end position="429"/>
    </location>
</feature>
<feature type="transmembrane region" description="Helical; Name=12" evidence="1 3">
    <location>
        <begin position="430"/>
        <end position="450"/>
    </location>
</feature>
<feature type="topological domain" description="Cytoplasmic" evidence="1">
    <location>
        <begin position="451"/>
        <end position="493"/>
    </location>
</feature>
<feature type="region of interest" description="Important for selectivity against fructose" evidence="1">
    <location>
        <begin position="277"/>
        <end position="279"/>
    </location>
</feature>
<feature type="region of interest" description="Disordered" evidence="4">
    <location>
        <begin position="469"/>
        <end position="493"/>
    </location>
</feature>
<feature type="binding site" evidence="1">
    <location>
        <position position="159"/>
    </location>
    <ligand>
        <name>D-glucose</name>
        <dbReference type="ChEBI" id="CHEBI:4167"/>
    </ligand>
</feature>
<feature type="binding site" evidence="1">
    <location>
        <begin position="280"/>
        <end position="281"/>
    </location>
    <ligand>
        <name>D-glucose</name>
        <dbReference type="ChEBI" id="CHEBI:4167"/>
    </ligand>
</feature>
<feature type="binding site" evidence="1">
    <location>
        <position position="286"/>
    </location>
    <ligand>
        <name>D-glucose</name>
        <dbReference type="ChEBI" id="CHEBI:4167"/>
    </ligand>
</feature>
<feature type="binding site" evidence="1">
    <location>
        <position position="315"/>
    </location>
    <ligand>
        <name>D-glucose</name>
        <dbReference type="ChEBI" id="CHEBI:4167"/>
    </ligand>
</feature>
<feature type="binding site" evidence="1">
    <location>
        <position position="378"/>
    </location>
    <ligand>
        <name>D-glucose</name>
        <dbReference type="ChEBI" id="CHEBI:4167"/>
    </ligand>
</feature>
<feature type="binding site" evidence="1">
    <location>
        <position position="386"/>
    </location>
    <ligand>
        <name>D-glucose</name>
        <dbReference type="ChEBI" id="CHEBI:4167"/>
    </ligand>
</feature>
<feature type="modified residue" description="Phosphothreonine" evidence="12">
    <location>
        <position position="232"/>
    </location>
</feature>
<feature type="modified residue" description="Phosphoserine" evidence="12">
    <location>
        <position position="471"/>
    </location>
</feature>
<feature type="modified residue" description="Phosphoserine" evidence="2">
    <location>
        <position position="482"/>
    </location>
</feature>
<feature type="modified residue" description="Phosphothreonine" evidence="2">
    <location>
        <position position="489"/>
    </location>
</feature>
<feature type="glycosylation site" description="N-linked (GlcNAc...) asparagine" evidence="6">
    <location>
        <position position="43"/>
    </location>
</feature>
<dbReference type="EMBL" id="M75135">
    <property type="protein sequence ID" value="AAA37704.1"/>
    <property type="molecule type" value="mRNA"/>
</dbReference>
<dbReference type="EMBL" id="X61093">
    <property type="protein sequence ID" value="CAA43406.1"/>
    <property type="molecule type" value="mRNA"/>
</dbReference>
<dbReference type="EMBL" id="U11853">
    <property type="protein sequence ID" value="AAB60666.1"/>
    <property type="molecule type" value="Genomic_DNA"/>
</dbReference>
<dbReference type="EMBL" id="U11844">
    <property type="protein sequence ID" value="AAB60666.1"/>
    <property type="status" value="JOINED"/>
    <property type="molecule type" value="Genomic_DNA"/>
</dbReference>
<dbReference type="EMBL" id="U11845">
    <property type="protein sequence ID" value="AAB60666.1"/>
    <property type="status" value="JOINED"/>
    <property type="molecule type" value="Genomic_DNA"/>
</dbReference>
<dbReference type="EMBL" id="U11846">
    <property type="protein sequence ID" value="AAB60666.1"/>
    <property type="status" value="JOINED"/>
    <property type="molecule type" value="Genomic_DNA"/>
</dbReference>
<dbReference type="EMBL" id="U11848">
    <property type="protein sequence ID" value="AAB60666.1"/>
    <property type="status" value="JOINED"/>
    <property type="molecule type" value="Genomic_DNA"/>
</dbReference>
<dbReference type="EMBL" id="U11849">
    <property type="protein sequence ID" value="AAB60666.1"/>
    <property type="status" value="JOINED"/>
    <property type="molecule type" value="Genomic_DNA"/>
</dbReference>
<dbReference type="EMBL" id="U11850">
    <property type="protein sequence ID" value="AAB60666.1"/>
    <property type="status" value="JOINED"/>
    <property type="molecule type" value="Genomic_DNA"/>
</dbReference>
<dbReference type="EMBL" id="U11851">
    <property type="protein sequence ID" value="AAB60666.1"/>
    <property type="status" value="JOINED"/>
    <property type="molecule type" value="Genomic_DNA"/>
</dbReference>
<dbReference type="EMBL" id="U11852">
    <property type="protein sequence ID" value="AAB60666.1"/>
    <property type="status" value="JOINED"/>
    <property type="molecule type" value="Genomic_DNA"/>
</dbReference>
<dbReference type="EMBL" id="BC034122">
    <property type="protein sequence ID" value="AAH34122.1"/>
    <property type="molecule type" value="mRNA"/>
</dbReference>
<dbReference type="EMBL" id="BC058811">
    <property type="protein sequence ID" value="AAH58811.1"/>
    <property type="molecule type" value="mRNA"/>
</dbReference>
<dbReference type="CCDS" id="CCDS20502.1"/>
<dbReference type="PIR" id="A41751">
    <property type="entry name" value="A41751"/>
</dbReference>
<dbReference type="RefSeq" id="NP_035531.3">
    <property type="nucleotide sequence ID" value="NM_011401.4"/>
</dbReference>
<dbReference type="SMR" id="P32037"/>
<dbReference type="BioGRID" id="203306">
    <property type="interactions" value="12"/>
</dbReference>
<dbReference type="FunCoup" id="P32037">
    <property type="interactions" value="292"/>
</dbReference>
<dbReference type="IntAct" id="P32037">
    <property type="interactions" value="2"/>
</dbReference>
<dbReference type="STRING" id="10090.ENSMUSP00000032476"/>
<dbReference type="GlyCosmos" id="P32037">
    <property type="glycosylation" value="1 site, No reported glycans"/>
</dbReference>
<dbReference type="GlyGen" id="P32037">
    <property type="glycosylation" value="3 sites, 1 N-linked glycan (1 site), 1 O-linked glycan (1 site)"/>
</dbReference>
<dbReference type="iPTMnet" id="P32037"/>
<dbReference type="MetOSite" id="P32037"/>
<dbReference type="PhosphoSitePlus" id="P32037"/>
<dbReference type="SwissPalm" id="P32037"/>
<dbReference type="PaxDb" id="10090-ENSMUSP00000032476"/>
<dbReference type="PeptideAtlas" id="P32037"/>
<dbReference type="ProteomicsDB" id="271348"/>
<dbReference type="DNASU" id="20527"/>
<dbReference type="Ensembl" id="ENSMUST00000032476.11">
    <property type="protein sequence ID" value="ENSMUSP00000032476.5"/>
    <property type="gene ID" value="ENSMUSG00000003153.11"/>
</dbReference>
<dbReference type="GeneID" id="20527"/>
<dbReference type="KEGG" id="mmu:20527"/>
<dbReference type="UCSC" id="uc009dpq.2">
    <property type="organism name" value="mouse"/>
</dbReference>
<dbReference type="AGR" id="MGI:95757"/>
<dbReference type="CTD" id="6515"/>
<dbReference type="MGI" id="MGI:95757">
    <property type="gene designation" value="Slc2a3"/>
</dbReference>
<dbReference type="VEuPathDB" id="HostDB:ENSMUSG00000003153"/>
<dbReference type="eggNOG" id="KOG0569">
    <property type="taxonomic scope" value="Eukaryota"/>
</dbReference>
<dbReference type="GeneTree" id="ENSGT00940000160313"/>
<dbReference type="HOGENOM" id="CLU_001265_30_5_1"/>
<dbReference type="InParanoid" id="P32037"/>
<dbReference type="OMA" id="GVFVYYM"/>
<dbReference type="OrthoDB" id="4540492at2759"/>
<dbReference type="PhylomeDB" id="P32037"/>
<dbReference type="TreeFam" id="TF313762"/>
<dbReference type="Reactome" id="R-MMU-189200">
    <property type="pathway name" value="Cellular hexose transport"/>
</dbReference>
<dbReference type="Reactome" id="R-MMU-196836">
    <property type="pathway name" value="Vitamin C (ascorbate) metabolism"/>
</dbReference>
<dbReference type="Reactome" id="R-MMU-6798695">
    <property type="pathway name" value="Neutrophil degranulation"/>
</dbReference>
<dbReference type="BioGRID-ORCS" id="20527">
    <property type="hits" value="2 hits in 75 CRISPR screens"/>
</dbReference>
<dbReference type="ChiTaRS" id="Slc2a3">
    <property type="organism name" value="mouse"/>
</dbReference>
<dbReference type="PRO" id="PR:P32037"/>
<dbReference type="Proteomes" id="UP000000589">
    <property type="component" value="Chromosome 6"/>
</dbReference>
<dbReference type="RNAct" id="P32037">
    <property type="molecule type" value="protein"/>
</dbReference>
<dbReference type="Bgee" id="ENSMUSG00000003153">
    <property type="expression patterns" value="Expressed in spermatocyte and 244 other cell types or tissues"/>
</dbReference>
<dbReference type="ExpressionAtlas" id="P32037">
    <property type="expression patterns" value="baseline and differential"/>
</dbReference>
<dbReference type="GO" id="GO:0002080">
    <property type="term" value="C:acrosomal membrane"/>
    <property type="evidence" value="ECO:0000314"/>
    <property type="project" value="MGI"/>
</dbReference>
<dbReference type="GO" id="GO:0042995">
    <property type="term" value="C:cell projection"/>
    <property type="evidence" value="ECO:0007669"/>
    <property type="project" value="UniProtKB-SubCell"/>
</dbReference>
<dbReference type="GO" id="GO:0005737">
    <property type="term" value="C:cytoplasm"/>
    <property type="evidence" value="ECO:0000314"/>
    <property type="project" value="UniProtKB"/>
</dbReference>
<dbReference type="GO" id="GO:0016020">
    <property type="term" value="C:membrane"/>
    <property type="evidence" value="ECO:0000250"/>
    <property type="project" value="UniProtKB"/>
</dbReference>
<dbReference type="GO" id="GO:0043204">
    <property type="term" value="C:perikaryon"/>
    <property type="evidence" value="ECO:0007669"/>
    <property type="project" value="UniProtKB-SubCell"/>
</dbReference>
<dbReference type="GO" id="GO:0005886">
    <property type="term" value="C:plasma membrane"/>
    <property type="evidence" value="ECO:0000314"/>
    <property type="project" value="UniProtKB"/>
</dbReference>
<dbReference type="GO" id="GO:0005536">
    <property type="term" value="F:D-glucose binding"/>
    <property type="evidence" value="ECO:0000250"/>
    <property type="project" value="UniProtKB"/>
</dbReference>
<dbReference type="GO" id="GO:0055056">
    <property type="term" value="F:D-glucose transmembrane transporter activity"/>
    <property type="evidence" value="ECO:0000314"/>
    <property type="project" value="UniProtKB"/>
</dbReference>
<dbReference type="GO" id="GO:0033300">
    <property type="term" value="F:dehydroascorbic acid transmembrane transporter activity"/>
    <property type="evidence" value="ECO:0000314"/>
    <property type="project" value="UniProtKB"/>
</dbReference>
<dbReference type="GO" id="GO:0005354">
    <property type="term" value="F:galactose transmembrane transporter activity"/>
    <property type="evidence" value="ECO:0000250"/>
    <property type="project" value="UniProtKB"/>
</dbReference>
<dbReference type="GO" id="GO:1904659">
    <property type="term" value="P:D-glucose transmembrane transport"/>
    <property type="evidence" value="ECO:0000314"/>
    <property type="project" value="UniProtKB"/>
</dbReference>
<dbReference type="GO" id="GO:0070837">
    <property type="term" value="P:dehydroascorbic acid transport"/>
    <property type="evidence" value="ECO:0000314"/>
    <property type="project" value="UniProtKB"/>
</dbReference>
<dbReference type="GO" id="GO:0015757">
    <property type="term" value="P:galactose transmembrane transport"/>
    <property type="evidence" value="ECO:0000250"/>
    <property type="project" value="UniProtKB"/>
</dbReference>
<dbReference type="CDD" id="cd17431">
    <property type="entry name" value="MFS_GLUT_Class1"/>
    <property type="match status" value="1"/>
</dbReference>
<dbReference type="FunFam" id="1.20.1250.20:FF:000040">
    <property type="entry name" value="Solute carrier family 2, facilitated glucose transporter member 1"/>
    <property type="match status" value="1"/>
</dbReference>
<dbReference type="Gene3D" id="1.20.1250.20">
    <property type="entry name" value="MFS general substrate transporter like domains"/>
    <property type="match status" value="1"/>
</dbReference>
<dbReference type="InterPro" id="IPR002945">
    <property type="entry name" value="Glc_transpt_3"/>
</dbReference>
<dbReference type="InterPro" id="IPR045263">
    <property type="entry name" value="GLUT"/>
</dbReference>
<dbReference type="InterPro" id="IPR020846">
    <property type="entry name" value="MFS_dom"/>
</dbReference>
<dbReference type="InterPro" id="IPR005828">
    <property type="entry name" value="MFS_sugar_transport-like"/>
</dbReference>
<dbReference type="InterPro" id="IPR036259">
    <property type="entry name" value="MFS_trans_sf"/>
</dbReference>
<dbReference type="InterPro" id="IPR003663">
    <property type="entry name" value="Sugar/inositol_transpt"/>
</dbReference>
<dbReference type="InterPro" id="IPR005829">
    <property type="entry name" value="Sugar_transporter_CS"/>
</dbReference>
<dbReference type="NCBIfam" id="TIGR00879">
    <property type="entry name" value="SP"/>
    <property type="match status" value="1"/>
</dbReference>
<dbReference type="PANTHER" id="PTHR23503">
    <property type="entry name" value="SOLUTE CARRIER FAMILY 2"/>
    <property type="match status" value="1"/>
</dbReference>
<dbReference type="PANTHER" id="PTHR23503:SF99">
    <property type="entry name" value="SOLUTE CARRIER FAMILY 2, FACILITATED GLUCOSE TRANSPORTER MEMBER 3"/>
    <property type="match status" value="1"/>
</dbReference>
<dbReference type="Pfam" id="PF00083">
    <property type="entry name" value="Sugar_tr"/>
    <property type="match status" value="1"/>
</dbReference>
<dbReference type="PRINTS" id="PR01192">
    <property type="entry name" value="GLUCTRSPORT3"/>
</dbReference>
<dbReference type="PRINTS" id="PR00171">
    <property type="entry name" value="SUGRTRNSPORT"/>
</dbReference>
<dbReference type="SUPFAM" id="SSF103473">
    <property type="entry name" value="MFS general substrate transporter"/>
    <property type="match status" value="1"/>
</dbReference>
<dbReference type="PROSITE" id="PS50850">
    <property type="entry name" value="MFS"/>
    <property type="match status" value="1"/>
</dbReference>
<dbReference type="PROSITE" id="PS00216">
    <property type="entry name" value="SUGAR_TRANSPORT_1"/>
    <property type="match status" value="1"/>
</dbReference>
<dbReference type="PROSITE" id="PS00217">
    <property type="entry name" value="SUGAR_TRANSPORT_2"/>
    <property type="match status" value="1"/>
</dbReference>
<gene>
    <name evidence="11" type="primary">Slc2a3</name>
    <name evidence="9" type="synonym">Glut3</name>
</gene>